<feature type="chain" id="PRO_0000056573" description="Probable succinate-semialdehyde dehydrogenase [NADP(+)]">
    <location>
        <begin position="1"/>
        <end position="491"/>
    </location>
</feature>
<feature type="active site" description="Proton acceptor" evidence="2">
    <location>
        <position position="263"/>
    </location>
</feature>
<feature type="active site" description="Nucleophile" evidence="2">
    <location>
        <position position="297"/>
    </location>
</feature>
<feature type="binding site" evidence="1">
    <location>
        <begin position="163"/>
        <end position="164"/>
    </location>
    <ligand>
        <name>NADP(+)</name>
        <dbReference type="ChEBI" id="CHEBI:58349"/>
    </ligand>
</feature>
<feature type="binding site" evidence="1">
    <location>
        <begin position="187"/>
        <end position="190"/>
    </location>
    <ligand>
        <name>NADP(+)</name>
        <dbReference type="ChEBI" id="CHEBI:58349"/>
    </ligand>
</feature>
<feature type="binding site" evidence="1">
    <location>
        <begin position="241"/>
        <end position="242"/>
    </location>
    <ligand>
        <name>NADP(+)</name>
        <dbReference type="ChEBI" id="CHEBI:58349"/>
    </ligand>
</feature>
<feature type="binding site" evidence="1">
    <location>
        <position position="264"/>
    </location>
    <ligand>
        <name>NADP(+)</name>
        <dbReference type="ChEBI" id="CHEBI:58349"/>
    </ligand>
</feature>
<feature type="binding site" evidence="1">
    <location>
        <position position="394"/>
    </location>
    <ligand>
        <name>NADP(+)</name>
        <dbReference type="ChEBI" id="CHEBI:58349"/>
    </ligand>
</feature>
<comment type="function">
    <text evidence="1">Catalyzes the NADP(+) dependent oxidation of succinate semialdehyde to succinate.</text>
</comment>
<comment type="catalytic activity">
    <reaction>
        <text>succinate semialdehyde + NADP(+) + H2O = succinate + NADPH + 2 H(+)</text>
        <dbReference type="Rhea" id="RHEA:13213"/>
        <dbReference type="ChEBI" id="CHEBI:15377"/>
        <dbReference type="ChEBI" id="CHEBI:15378"/>
        <dbReference type="ChEBI" id="CHEBI:30031"/>
        <dbReference type="ChEBI" id="CHEBI:57706"/>
        <dbReference type="ChEBI" id="CHEBI:57783"/>
        <dbReference type="ChEBI" id="CHEBI:58349"/>
        <dbReference type="EC" id="1.2.1.79"/>
    </reaction>
</comment>
<comment type="pathway">
    <text>Amino-acid degradation; 4-aminobutanoate degradation.</text>
</comment>
<comment type="similarity">
    <text evidence="3">Belongs to the aldehyde dehydrogenase family.</text>
</comment>
<accession>P55653</accession>
<reference key="1">
    <citation type="journal article" date="1997" name="Nature">
        <title>Molecular basis of symbiosis between Rhizobium and legumes.</title>
        <authorList>
            <person name="Freiberg C.A."/>
            <person name="Fellay R."/>
            <person name="Bairoch A."/>
            <person name="Broughton W.J."/>
            <person name="Rosenthal A."/>
            <person name="Perret X."/>
        </authorList>
    </citation>
    <scope>NUCLEOTIDE SEQUENCE [LARGE SCALE GENOMIC DNA]</scope>
    <source>
        <strain>NBRC 101917 / NGR234</strain>
    </source>
</reference>
<reference key="2">
    <citation type="journal article" date="2009" name="Appl. Environ. Microbiol.">
        <title>Rhizobium sp. strain NGR234 possesses a remarkable number of secretion systems.</title>
        <authorList>
            <person name="Schmeisser C."/>
            <person name="Liesegang H."/>
            <person name="Krysciak D."/>
            <person name="Bakkou N."/>
            <person name="Le Quere A."/>
            <person name="Wollherr A."/>
            <person name="Heinemeyer I."/>
            <person name="Morgenstern B."/>
            <person name="Pommerening-Roeser A."/>
            <person name="Flores M."/>
            <person name="Palacios R."/>
            <person name="Brenner S."/>
            <person name="Gottschalk G."/>
            <person name="Schmitz R.A."/>
            <person name="Broughton W.J."/>
            <person name="Perret X."/>
            <person name="Strittmatter A.W."/>
            <person name="Streit W.R."/>
        </authorList>
    </citation>
    <scope>NUCLEOTIDE SEQUENCE [LARGE SCALE GENOMIC DNA]</scope>
    <source>
        <strain>NBRC 101917 / NGR234</strain>
    </source>
</reference>
<geneLocation type="plasmid">
    <name>sym pNGR234a</name>
</geneLocation>
<name>GABD_SINFN</name>
<organism>
    <name type="scientific">Sinorhizobium fredii (strain NBRC 101917 / NGR234)</name>
    <dbReference type="NCBI Taxonomy" id="394"/>
    <lineage>
        <taxon>Bacteria</taxon>
        <taxon>Pseudomonadati</taxon>
        <taxon>Pseudomonadota</taxon>
        <taxon>Alphaproteobacteria</taxon>
        <taxon>Hyphomicrobiales</taxon>
        <taxon>Rhizobiaceae</taxon>
        <taxon>Sinorhizobium/Ensifer group</taxon>
        <taxon>Sinorhizobium</taxon>
    </lineage>
</organism>
<keyword id="KW-0521">NADP</keyword>
<keyword id="KW-0560">Oxidoreductase</keyword>
<keyword id="KW-0614">Plasmid</keyword>
<keyword id="KW-1185">Reference proteome</keyword>
<protein>
    <recommendedName>
        <fullName>Probable succinate-semialdehyde dehydrogenase [NADP(+)]</fullName>
        <shortName>SSDH</shortName>
        <ecNumber>1.2.1.79</ecNumber>
    </recommendedName>
</protein>
<gene>
    <name type="primary">gabD</name>
    <name type="ordered locus">NGR_a01630</name>
    <name type="ORF">y4sJ</name>
</gene>
<proteinExistence type="inferred from homology"/>
<dbReference type="EC" id="1.2.1.79"/>
<dbReference type="EMBL" id="U00090">
    <property type="protein sequence ID" value="AAB91849.1"/>
    <property type="molecule type" value="Genomic_DNA"/>
</dbReference>
<dbReference type="PIR" id="S43963">
    <property type="entry name" value="S43963"/>
</dbReference>
<dbReference type="RefSeq" id="NP_444062.1">
    <property type="nucleotide sequence ID" value="NC_000914.2"/>
</dbReference>
<dbReference type="RefSeq" id="WP_010875199.1">
    <property type="nucleotide sequence ID" value="NC_000914.2"/>
</dbReference>
<dbReference type="SMR" id="P55653"/>
<dbReference type="KEGG" id="rhi:NGR_a01630"/>
<dbReference type="PATRIC" id="fig|394.7.peg.153"/>
<dbReference type="eggNOG" id="COG1012">
    <property type="taxonomic scope" value="Bacteria"/>
</dbReference>
<dbReference type="HOGENOM" id="CLU_005391_5_1_5"/>
<dbReference type="OrthoDB" id="9812625at2"/>
<dbReference type="UniPathway" id="UPA00733"/>
<dbReference type="Proteomes" id="UP000001054">
    <property type="component" value="Plasmid pNGR234a"/>
</dbReference>
<dbReference type="GO" id="GO:0004777">
    <property type="term" value="F:succinate-semialdehyde dehydrogenase (NAD+) activity"/>
    <property type="evidence" value="ECO:0007669"/>
    <property type="project" value="TreeGrafter"/>
</dbReference>
<dbReference type="GO" id="GO:0036243">
    <property type="term" value="F:succinate-semialdehyde dehydrogenase (NADP+) activity"/>
    <property type="evidence" value="ECO:0007669"/>
    <property type="project" value="UniProtKB-EC"/>
</dbReference>
<dbReference type="GO" id="GO:0009450">
    <property type="term" value="P:gamma-aminobutyric acid catabolic process"/>
    <property type="evidence" value="ECO:0007669"/>
    <property type="project" value="UniProtKB-UniPathway"/>
</dbReference>
<dbReference type="CDD" id="cd07103">
    <property type="entry name" value="ALDH_F5_SSADH_GabD"/>
    <property type="match status" value="1"/>
</dbReference>
<dbReference type="FunFam" id="3.40.309.10:FF:000004">
    <property type="entry name" value="Succinate-semialdehyde dehydrogenase I"/>
    <property type="match status" value="1"/>
</dbReference>
<dbReference type="FunFam" id="3.40.605.10:FF:000005">
    <property type="entry name" value="Succinate-semialdehyde dehydrogenase I"/>
    <property type="match status" value="1"/>
</dbReference>
<dbReference type="Gene3D" id="3.40.605.10">
    <property type="entry name" value="Aldehyde Dehydrogenase, Chain A, domain 1"/>
    <property type="match status" value="1"/>
</dbReference>
<dbReference type="Gene3D" id="3.40.309.10">
    <property type="entry name" value="Aldehyde Dehydrogenase, Chain A, domain 2"/>
    <property type="match status" value="1"/>
</dbReference>
<dbReference type="InterPro" id="IPR016161">
    <property type="entry name" value="Ald_DH/histidinol_DH"/>
</dbReference>
<dbReference type="InterPro" id="IPR016163">
    <property type="entry name" value="Ald_DH_C"/>
</dbReference>
<dbReference type="InterPro" id="IPR029510">
    <property type="entry name" value="Ald_DH_CS_GLU"/>
</dbReference>
<dbReference type="InterPro" id="IPR016162">
    <property type="entry name" value="Ald_DH_N"/>
</dbReference>
<dbReference type="InterPro" id="IPR015590">
    <property type="entry name" value="Aldehyde_DH_dom"/>
</dbReference>
<dbReference type="InterPro" id="IPR050740">
    <property type="entry name" value="Aldehyde_DH_Superfamily"/>
</dbReference>
<dbReference type="InterPro" id="IPR010102">
    <property type="entry name" value="Succ_semiAld_DH"/>
</dbReference>
<dbReference type="NCBIfam" id="TIGR01780">
    <property type="entry name" value="SSADH"/>
    <property type="match status" value="1"/>
</dbReference>
<dbReference type="PANTHER" id="PTHR43353">
    <property type="entry name" value="SUCCINATE-SEMIALDEHYDE DEHYDROGENASE, MITOCHONDRIAL"/>
    <property type="match status" value="1"/>
</dbReference>
<dbReference type="PANTHER" id="PTHR43353:SF5">
    <property type="entry name" value="SUCCINATE-SEMIALDEHYDE DEHYDROGENASE, MITOCHONDRIAL"/>
    <property type="match status" value="1"/>
</dbReference>
<dbReference type="Pfam" id="PF00171">
    <property type="entry name" value="Aldedh"/>
    <property type="match status" value="1"/>
</dbReference>
<dbReference type="SUPFAM" id="SSF53720">
    <property type="entry name" value="ALDH-like"/>
    <property type="match status" value="1"/>
</dbReference>
<dbReference type="PROSITE" id="PS00687">
    <property type="entry name" value="ALDEHYDE_DEHYDR_GLU"/>
    <property type="match status" value="1"/>
</dbReference>
<evidence type="ECO:0000250" key="1"/>
<evidence type="ECO:0000255" key="2">
    <source>
        <dbReference type="PROSITE-ProRule" id="PRU10007"/>
    </source>
</evidence>
<evidence type="ECO:0000305" key="3"/>
<sequence length="491" mass="53254">MTLTSALTRHLKCPELFRNLANEPHPSVAGQRQRFSVFNPSTGELLAEVPDMGAADAHAAIERADAAQEPWSGLTARARSDILWKWHRFILEHSDDLAAILTAEMGKPLGEAKSEVQHAAAYLQWYAEEANRIYGETISAPSTDRRMLVIKQPIGVVGAITPWNFPASMVARKISPALAAGCTVVLKPAEQTPLVAGAMFALAKLAGFPDGVLNLVYASEGDAIGRELCTNPKVRKISFTGSTEVGRLLMRQCSDQIKRISFELGGNAPFIVFDDADIDAAVDGAIQAKFRNAGQTCVSANRIYVQSGVYAEFAEKFTERVRTLKVGDGFDPNVAIGPLINQEALKKIELHISDAVQKGARVRSGGRRTGSSGTFFEPTVVTDVSKTMRLAEEETFGPLAPLLRFDDADHVVREANDTIYGLAAYFYASNLKRVWRVAEALEYGMVGINTGRMSSEAAPFGGVKQSGIGREGSRHGLEDYLDMKYLCVGGL</sequence>